<proteinExistence type="evidence at protein level"/>
<comment type="function">
    <text evidence="7">Accepts ubiquitin from the E1 complex and catalyzes its covalent attachment to other proteins. In vitro, in the presence or in the absence of BRCA1-BARD1 E3 ubiquitin-protein ligase complex, catalyzes the synthesis of 'Lys-48'-linked polyubiquitin chains. Does not transfer ubiquitin directly to but elongates monoubiquitinated substrate protein. Mediates the selective degradation of short-lived and abnormal proteins, such as the endoplasmic reticulum-associated degradation (ERAD) of misfolded lumenal proteins. Ubiquitinates huntingtin. May mediate foam cell formation by the suppression of apoptosis of lipid-bearing macrophages through ubiquitination and subsequence degradation of p53/TP53. Proposed to be involved in ubiquitination and proteolytic processing of NF-kappa-B; in vitro supports ubiquitination of NFKB1. Involved in stabilization of CASP12 during ER stress-mediated amyloid-beta neurotoxicity probably by inhibiting proteasome activity; in vitro ubiquitinates CASP12.</text>
</comment>
<comment type="catalytic activity">
    <reaction evidence="4 5">
        <text>S-ubiquitinyl-[E1 ubiquitin-activating enzyme]-L-cysteine + [E2 ubiquitin-conjugating enzyme]-L-cysteine = [E1 ubiquitin-activating enzyme]-L-cysteine + S-ubiquitinyl-[E2 ubiquitin-conjugating enzyme]-L-cysteine.</text>
        <dbReference type="EC" id="2.3.2.23"/>
    </reaction>
</comment>
<comment type="pathway">
    <text evidence="4">Protein modification; protein ubiquitination.</text>
</comment>
<comment type="subunit">
    <text evidence="2">Interacts with RNF138/NARF. Interacts with BRCA1.</text>
</comment>
<comment type="subcellular location">
    <subcellularLocation>
        <location evidence="1">Cytoplasm</location>
    </subcellularLocation>
</comment>
<comment type="tissue specificity">
    <text evidence="6">Expressed in the brain, with highest levels found in the mitral cells of the olfactory bulb, the pyramidal cell layer of the hippocampus and the Purkinje cells of the cerebellar cortex.</text>
</comment>
<comment type="developmental stage">
    <text evidence="6">Expressed at all stages of brain development and increases significantly between postnatal days 7 and 14.</text>
</comment>
<comment type="PTM">
    <text evidence="1">Sumoylation at Lys-14 impairs catalytic activity.</text>
</comment>
<comment type="disruption phenotype">
    <text evidence="7">Neurons are resistant to amyloid-beta neurotoxicity. Significantly lower CASP12 expression in brain.</text>
</comment>
<comment type="similarity">
    <text evidence="4">Belongs to the ubiquitin-conjugating enzyme family.</text>
</comment>
<protein>
    <recommendedName>
        <fullName>Ubiquitin-conjugating enzyme E2 K</fullName>
        <ecNumber>2.3.2.23</ecNumber>
    </recommendedName>
    <alternativeName>
        <fullName>E2 ubiquitin-conjugating enzyme K</fullName>
    </alternativeName>
    <alternativeName>
        <fullName>Huntingtin-interacting protein 2</fullName>
        <shortName>HIP-2</shortName>
    </alternativeName>
    <alternativeName>
        <fullName>Ubiquitin carrier protein</fullName>
    </alternativeName>
    <alternativeName>
        <fullName>Ubiquitin-conjugating enzyme E2-25 kDa</fullName>
        <shortName>Ubiquitin-conjugating enzyme E2(25K)</shortName>
        <shortName>Ubiquitin-conjugating enzyme E2-25K</shortName>
    </alternativeName>
    <alternativeName>
        <fullName>Ubiquitin-protein ligase</fullName>
    </alternativeName>
</protein>
<accession>P61087</accession>
<accession>O54806</accession>
<accession>P27924</accession>
<accession>Q16721</accession>
<accession>Q9CVV9</accession>
<gene>
    <name type="primary">Ube2k</name>
    <name type="synonym">Hip2</name>
</gene>
<organism>
    <name type="scientific">Mus musculus</name>
    <name type="common">Mouse</name>
    <dbReference type="NCBI Taxonomy" id="10090"/>
    <lineage>
        <taxon>Eukaryota</taxon>
        <taxon>Metazoa</taxon>
        <taxon>Chordata</taxon>
        <taxon>Craniata</taxon>
        <taxon>Vertebrata</taxon>
        <taxon>Euteleostomi</taxon>
        <taxon>Mammalia</taxon>
        <taxon>Eutheria</taxon>
        <taxon>Euarchontoglires</taxon>
        <taxon>Glires</taxon>
        <taxon>Rodentia</taxon>
        <taxon>Myomorpha</taxon>
        <taxon>Muroidea</taxon>
        <taxon>Muridae</taxon>
        <taxon>Murinae</taxon>
        <taxon>Mus</taxon>
        <taxon>Mus</taxon>
    </lineage>
</organism>
<name>UBE2K_MOUSE</name>
<evidence type="ECO:0000250" key="1">
    <source>
        <dbReference type="UniProtKB" id="P61085"/>
    </source>
</evidence>
<evidence type="ECO:0000250" key="2">
    <source>
        <dbReference type="UniProtKB" id="P61086"/>
    </source>
</evidence>
<evidence type="ECO:0000255" key="3">
    <source>
        <dbReference type="PROSITE-ProRule" id="PRU00212"/>
    </source>
</evidence>
<evidence type="ECO:0000255" key="4">
    <source>
        <dbReference type="PROSITE-ProRule" id="PRU00388"/>
    </source>
</evidence>
<evidence type="ECO:0000255" key="5">
    <source>
        <dbReference type="PROSITE-ProRule" id="PRU10133"/>
    </source>
</evidence>
<evidence type="ECO:0000269" key="6">
    <source>
    </source>
</evidence>
<evidence type="ECO:0000269" key="7">
    <source>
    </source>
</evidence>
<evidence type="ECO:0000305" key="8"/>
<keyword id="KW-0007">Acetylation</keyword>
<keyword id="KW-0067">ATP-binding</keyword>
<keyword id="KW-0963">Cytoplasm</keyword>
<keyword id="KW-1017">Isopeptide bond</keyword>
<keyword id="KW-0547">Nucleotide-binding</keyword>
<keyword id="KW-0597">Phosphoprotein</keyword>
<keyword id="KW-1185">Reference proteome</keyword>
<keyword id="KW-0808">Transferase</keyword>
<keyword id="KW-0832">Ubl conjugation</keyword>
<keyword id="KW-0833">Ubl conjugation pathway</keyword>
<dbReference type="EC" id="2.3.2.23"/>
<dbReference type="EMBL" id="AB011081">
    <property type="protein sequence ID" value="BAA24927.1"/>
    <property type="molecule type" value="mRNA"/>
</dbReference>
<dbReference type="EMBL" id="BC002013">
    <property type="protein sequence ID" value="AAH02013.1"/>
    <property type="molecule type" value="mRNA"/>
</dbReference>
<dbReference type="EMBL" id="BC085311">
    <property type="protein sequence ID" value="AAH85311.1"/>
    <property type="molecule type" value="mRNA"/>
</dbReference>
<dbReference type="EMBL" id="AK006316">
    <property type="protein sequence ID" value="BAB24523.1"/>
    <property type="molecule type" value="mRNA"/>
</dbReference>
<dbReference type="CCDS" id="CCDS39098.1"/>
<dbReference type="RefSeq" id="NP_058066.2">
    <property type="nucleotide sequence ID" value="NM_016786.4"/>
</dbReference>
<dbReference type="BMRB" id="P61087"/>
<dbReference type="SMR" id="P61087"/>
<dbReference type="BioGRID" id="207286">
    <property type="interactions" value="26"/>
</dbReference>
<dbReference type="FunCoup" id="P61087">
    <property type="interactions" value="5076"/>
</dbReference>
<dbReference type="IntAct" id="P61087">
    <property type="interactions" value="13"/>
</dbReference>
<dbReference type="STRING" id="10090.ENSMUSP00000122471"/>
<dbReference type="GlyGen" id="P61087">
    <property type="glycosylation" value="1 site, 1 O-linked glycan (1 site)"/>
</dbReference>
<dbReference type="iPTMnet" id="P61087"/>
<dbReference type="PhosphoSitePlus" id="P61087"/>
<dbReference type="SwissPalm" id="P61087"/>
<dbReference type="REPRODUCTION-2DPAGE" id="P61087"/>
<dbReference type="jPOST" id="P61087"/>
<dbReference type="PaxDb" id="10090-ENSMUSP00000122471"/>
<dbReference type="PeptideAtlas" id="P61087"/>
<dbReference type="ProteomicsDB" id="298061"/>
<dbReference type="Pumba" id="P61087"/>
<dbReference type="Antibodypedia" id="11733">
    <property type="antibodies" value="417 antibodies from 40 providers"/>
</dbReference>
<dbReference type="DNASU" id="53323"/>
<dbReference type="Ensembl" id="ENSMUST00000142407.8">
    <property type="protein sequence ID" value="ENSMUSP00000122471.2"/>
    <property type="gene ID" value="ENSMUSG00000029203.17"/>
</dbReference>
<dbReference type="GeneID" id="53323"/>
<dbReference type="KEGG" id="mmu:53323"/>
<dbReference type="UCSC" id="uc008xnu.1">
    <property type="organism name" value="mouse"/>
</dbReference>
<dbReference type="AGR" id="MGI:1858216"/>
<dbReference type="CTD" id="3093"/>
<dbReference type="MGI" id="MGI:1858216">
    <property type="gene designation" value="Ube2k"/>
</dbReference>
<dbReference type="VEuPathDB" id="HostDB:ENSMUSG00000029203"/>
<dbReference type="eggNOG" id="KOG0418">
    <property type="taxonomic scope" value="Eukaryota"/>
</dbReference>
<dbReference type="GeneTree" id="ENSGT00670000098059"/>
<dbReference type="InParanoid" id="P61087"/>
<dbReference type="OMA" id="HWTFVYA"/>
<dbReference type="OrthoDB" id="9993688at2759"/>
<dbReference type="PhylomeDB" id="P61087"/>
<dbReference type="TreeFam" id="TF101127"/>
<dbReference type="Reactome" id="R-MMU-8866652">
    <property type="pathway name" value="Synthesis of active ubiquitin: roles of E1 and E2 enzymes"/>
</dbReference>
<dbReference type="Reactome" id="R-MMU-983168">
    <property type="pathway name" value="Antigen processing: Ubiquitination &amp; Proteasome degradation"/>
</dbReference>
<dbReference type="UniPathway" id="UPA00143"/>
<dbReference type="BioGRID-ORCS" id="53323">
    <property type="hits" value="8 hits in 80 CRISPR screens"/>
</dbReference>
<dbReference type="ChiTaRS" id="Ube2k">
    <property type="organism name" value="mouse"/>
</dbReference>
<dbReference type="PRO" id="PR:P61087"/>
<dbReference type="Proteomes" id="UP000000589">
    <property type="component" value="Chromosome 5"/>
</dbReference>
<dbReference type="RNAct" id="P61087">
    <property type="molecule type" value="protein"/>
</dbReference>
<dbReference type="Bgee" id="ENSMUSG00000029203">
    <property type="expression patterns" value="Expressed in embryonic brain and 271 other cell types or tissues"/>
</dbReference>
<dbReference type="ExpressionAtlas" id="P61087">
    <property type="expression patterns" value="baseline and differential"/>
</dbReference>
<dbReference type="GO" id="GO:0005737">
    <property type="term" value="C:cytoplasm"/>
    <property type="evidence" value="ECO:0000314"/>
    <property type="project" value="MGI"/>
</dbReference>
<dbReference type="GO" id="GO:0032433">
    <property type="term" value="C:filopodium tip"/>
    <property type="evidence" value="ECO:0000314"/>
    <property type="project" value="MGI"/>
</dbReference>
<dbReference type="GO" id="GO:0005634">
    <property type="term" value="C:nucleus"/>
    <property type="evidence" value="ECO:0000314"/>
    <property type="project" value="MGI"/>
</dbReference>
<dbReference type="GO" id="GO:0005524">
    <property type="term" value="F:ATP binding"/>
    <property type="evidence" value="ECO:0007669"/>
    <property type="project" value="UniProtKB-KW"/>
</dbReference>
<dbReference type="GO" id="GO:0061631">
    <property type="term" value="F:ubiquitin conjugating enzyme activity"/>
    <property type="evidence" value="ECO:0000266"/>
    <property type="project" value="MGI"/>
</dbReference>
<dbReference type="GO" id="GO:0031625">
    <property type="term" value="F:ubiquitin protein ligase binding"/>
    <property type="evidence" value="ECO:0000250"/>
    <property type="project" value="UniProtKB"/>
</dbReference>
<dbReference type="GO" id="GO:0004842">
    <property type="term" value="F:ubiquitin-protein transferase activity"/>
    <property type="evidence" value="ECO:0000250"/>
    <property type="project" value="UniProtKB"/>
</dbReference>
<dbReference type="GO" id="GO:0034450">
    <property type="term" value="F:ubiquitin-ubiquitin ligase activity"/>
    <property type="evidence" value="ECO:0007669"/>
    <property type="project" value="Ensembl"/>
</dbReference>
<dbReference type="GO" id="GO:0035458">
    <property type="term" value="P:cellular response to interferon-beta"/>
    <property type="evidence" value="ECO:0007669"/>
    <property type="project" value="Ensembl"/>
</dbReference>
<dbReference type="GO" id="GO:0010994">
    <property type="term" value="P:free ubiquitin chain polymerization"/>
    <property type="evidence" value="ECO:0007669"/>
    <property type="project" value="Ensembl"/>
</dbReference>
<dbReference type="GO" id="GO:0070059">
    <property type="term" value="P:intrinsic apoptotic signaling pathway in response to endoplasmic reticulum stress"/>
    <property type="evidence" value="ECO:0000266"/>
    <property type="project" value="MGI"/>
</dbReference>
<dbReference type="GO" id="GO:1903265">
    <property type="term" value="P:positive regulation of tumor necrosis factor-mediated signaling pathway"/>
    <property type="evidence" value="ECO:0007669"/>
    <property type="project" value="Ensembl"/>
</dbReference>
<dbReference type="GO" id="GO:0060340">
    <property type="term" value="P:positive regulation of type I interferon-mediated signaling pathway"/>
    <property type="evidence" value="ECO:0007669"/>
    <property type="project" value="Ensembl"/>
</dbReference>
<dbReference type="GO" id="GO:0070936">
    <property type="term" value="P:protein K48-linked ubiquitination"/>
    <property type="evidence" value="ECO:0000250"/>
    <property type="project" value="UniProtKB"/>
</dbReference>
<dbReference type="GO" id="GO:0032434">
    <property type="term" value="P:regulation of proteasomal ubiquitin-dependent protein catabolic process"/>
    <property type="evidence" value="ECO:0000314"/>
    <property type="project" value="MGI"/>
</dbReference>
<dbReference type="CDD" id="cd14390">
    <property type="entry name" value="UBA_II_E2_UBE2K"/>
    <property type="match status" value="1"/>
</dbReference>
<dbReference type="CDD" id="cd23800">
    <property type="entry name" value="UBCc_UBE2K"/>
    <property type="match status" value="1"/>
</dbReference>
<dbReference type="FunFam" id="1.10.8.10:FF:000010">
    <property type="entry name" value="Putative ubiquitin-conjugating enzyme e2 k"/>
    <property type="match status" value="1"/>
</dbReference>
<dbReference type="FunFam" id="3.10.110.10:FF:000021">
    <property type="entry name" value="Putative ubiquitin-conjugating enzyme e2 k"/>
    <property type="match status" value="1"/>
</dbReference>
<dbReference type="Gene3D" id="1.10.8.10">
    <property type="entry name" value="DNA helicase RuvA subunit, C-terminal domain"/>
    <property type="match status" value="1"/>
</dbReference>
<dbReference type="Gene3D" id="3.10.110.10">
    <property type="entry name" value="Ubiquitin Conjugating Enzyme"/>
    <property type="match status" value="1"/>
</dbReference>
<dbReference type="InterPro" id="IPR015940">
    <property type="entry name" value="UBA"/>
</dbReference>
<dbReference type="InterPro" id="IPR009060">
    <property type="entry name" value="UBA-like_sf"/>
</dbReference>
<dbReference type="InterPro" id="IPR042599">
    <property type="entry name" value="UBE2K_UBA"/>
</dbReference>
<dbReference type="InterPro" id="IPR000608">
    <property type="entry name" value="UBQ-conjugat_E2_core"/>
</dbReference>
<dbReference type="InterPro" id="IPR023313">
    <property type="entry name" value="UBQ-conjugating_AS"/>
</dbReference>
<dbReference type="InterPro" id="IPR016135">
    <property type="entry name" value="UBQ-conjugating_enzyme/RWD"/>
</dbReference>
<dbReference type="PANTHER" id="PTHR24068">
    <property type="entry name" value="UBIQUITIN-CONJUGATING ENZYME E2"/>
    <property type="match status" value="1"/>
</dbReference>
<dbReference type="Pfam" id="PF00627">
    <property type="entry name" value="UBA"/>
    <property type="match status" value="1"/>
</dbReference>
<dbReference type="Pfam" id="PF00179">
    <property type="entry name" value="UQ_con"/>
    <property type="match status" value="1"/>
</dbReference>
<dbReference type="SMART" id="SM00165">
    <property type="entry name" value="UBA"/>
    <property type="match status" value="1"/>
</dbReference>
<dbReference type="SMART" id="SM00212">
    <property type="entry name" value="UBCc"/>
    <property type="match status" value="1"/>
</dbReference>
<dbReference type="SUPFAM" id="SSF46934">
    <property type="entry name" value="UBA-like"/>
    <property type="match status" value="1"/>
</dbReference>
<dbReference type="SUPFAM" id="SSF54495">
    <property type="entry name" value="UBC-like"/>
    <property type="match status" value="1"/>
</dbReference>
<dbReference type="PROSITE" id="PS50030">
    <property type="entry name" value="UBA"/>
    <property type="match status" value="1"/>
</dbReference>
<dbReference type="PROSITE" id="PS00183">
    <property type="entry name" value="UBC_1"/>
    <property type="match status" value="1"/>
</dbReference>
<dbReference type="PROSITE" id="PS50127">
    <property type="entry name" value="UBC_2"/>
    <property type="match status" value="1"/>
</dbReference>
<sequence length="200" mass="22407">MANIAVQRIKREFKEVLKSEETSKNQIKVDLVDENFTELRGEIAGPPDTPYEGGRYQLEIKIPETYPFNPPKVRFITKIWHPNISSVTGAICLDILKDQWAAAMTLRTVLLSLQALLAAAEPDDPQDAVVANQYKQNPEMFKQTARLWAHVYAGAPVSSPEYTKKIENLCAMGFDRNAVIVALSSKSWDVETATELLLSN</sequence>
<reference key="1">
    <citation type="journal article" date="1999" name="J. Chem. Neuroanat.">
        <title>Localization of huntingtin-interacting protein-2 (Hip-2) mRNA in the developing mouse brain.</title>
        <authorList>
            <person name="Tanno Y."/>
            <person name="Mori T."/>
            <person name="Yokoya S."/>
            <person name="Kanazawa K."/>
            <person name="Honma Y."/>
            <person name="Nikaido T."/>
            <person name="Takeda J."/>
            <person name="Tojo M."/>
            <person name="Yamamoto T."/>
            <person name="Wanaka A."/>
        </authorList>
    </citation>
    <scope>NUCLEOTIDE SEQUENCE [MRNA]</scope>
    <scope>TISSUE SPECIFICITY</scope>
    <scope>DEVELOPMENTAL STAGE</scope>
    <source>
        <tissue>Brain</tissue>
    </source>
</reference>
<reference key="2">
    <citation type="journal article" date="2004" name="Genome Res.">
        <title>The status, quality, and expansion of the NIH full-length cDNA project: the Mammalian Gene Collection (MGC).</title>
        <authorList>
            <consortium name="The MGC Project Team"/>
        </authorList>
    </citation>
    <scope>NUCLEOTIDE SEQUENCE [LARGE SCALE MRNA]</scope>
    <source>
        <tissue>Bone</tissue>
        <tissue>Mammary tumor</tissue>
    </source>
</reference>
<reference key="3">
    <citation type="journal article" date="2005" name="Science">
        <title>The transcriptional landscape of the mammalian genome.</title>
        <authorList>
            <person name="Carninci P."/>
            <person name="Kasukawa T."/>
            <person name="Katayama S."/>
            <person name="Gough J."/>
            <person name="Frith M.C."/>
            <person name="Maeda N."/>
            <person name="Oyama R."/>
            <person name="Ravasi T."/>
            <person name="Lenhard B."/>
            <person name="Wells C."/>
            <person name="Kodzius R."/>
            <person name="Shimokawa K."/>
            <person name="Bajic V.B."/>
            <person name="Brenner S.E."/>
            <person name="Batalov S."/>
            <person name="Forrest A.R."/>
            <person name="Zavolan M."/>
            <person name="Davis M.J."/>
            <person name="Wilming L.G."/>
            <person name="Aidinis V."/>
            <person name="Allen J.E."/>
            <person name="Ambesi-Impiombato A."/>
            <person name="Apweiler R."/>
            <person name="Aturaliya R.N."/>
            <person name="Bailey T.L."/>
            <person name="Bansal M."/>
            <person name="Baxter L."/>
            <person name="Beisel K.W."/>
            <person name="Bersano T."/>
            <person name="Bono H."/>
            <person name="Chalk A.M."/>
            <person name="Chiu K.P."/>
            <person name="Choudhary V."/>
            <person name="Christoffels A."/>
            <person name="Clutterbuck D.R."/>
            <person name="Crowe M.L."/>
            <person name="Dalla E."/>
            <person name="Dalrymple B.P."/>
            <person name="de Bono B."/>
            <person name="Della Gatta G."/>
            <person name="di Bernardo D."/>
            <person name="Down T."/>
            <person name="Engstrom P."/>
            <person name="Fagiolini M."/>
            <person name="Faulkner G."/>
            <person name="Fletcher C.F."/>
            <person name="Fukushima T."/>
            <person name="Furuno M."/>
            <person name="Futaki S."/>
            <person name="Gariboldi M."/>
            <person name="Georgii-Hemming P."/>
            <person name="Gingeras T.R."/>
            <person name="Gojobori T."/>
            <person name="Green R.E."/>
            <person name="Gustincich S."/>
            <person name="Harbers M."/>
            <person name="Hayashi Y."/>
            <person name="Hensch T.K."/>
            <person name="Hirokawa N."/>
            <person name="Hill D."/>
            <person name="Huminiecki L."/>
            <person name="Iacono M."/>
            <person name="Ikeo K."/>
            <person name="Iwama A."/>
            <person name="Ishikawa T."/>
            <person name="Jakt M."/>
            <person name="Kanapin A."/>
            <person name="Katoh M."/>
            <person name="Kawasawa Y."/>
            <person name="Kelso J."/>
            <person name="Kitamura H."/>
            <person name="Kitano H."/>
            <person name="Kollias G."/>
            <person name="Krishnan S.P."/>
            <person name="Kruger A."/>
            <person name="Kummerfeld S.K."/>
            <person name="Kurochkin I.V."/>
            <person name="Lareau L.F."/>
            <person name="Lazarevic D."/>
            <person name="Lipovich L."/>
            <person name="Liu J."/>
            <person name="Liuni S."/>
            <person name="McWilliam S."/>
            <person name="Madan Babu M."/>
            <person name="Madera M."/>
            <person name="Marchionni L."/>
            <person name="Matsuda H."/>
            <person name="Matsuzawa S."/>
            <person name="Miki H."/>
            <person name="Mignone F."/>
            <person name="Miyake S."/>
            <person name="Morris K."/>
            <person name="Mottagui-Tabar S."/>
            <person name="Mulder N."/>
            <person name="Nakano N."/>
            <person name="Nakauchi H."/>
            <person name="Ng P."/>
            <person name="Nilsson R."/>
            <person name="Nishiguchi S."/>
            <person name="Nishikawa S."/>
            <person name="Nori F."/>
            <person name="Ohara O."/>
            <person name="Okazaki Y."/>
            <person name="Orlando V."/>
            <person name="Pang K.C."/>
            <person name="Pavan W.J."/>
            <person name="Pavesi G."/>
            <person name="Pesole G."/>
            <person name="Petrovsky N."/>
            <person name="Piazza S."/>
            <person name="Reed J."/>
            <person name="Reid J.F."/>
            <person name="Ring B.Z."/>
            <person name="Ringwald M."/>
            <person name="Rost B."/>
            <person name="Ruan Y."/>
            <person name="Salzberg S.L."/>
            <person name="Sandelin A."/>
            <person name="Schneider C."/>
            <person name="Schoenbach C."/>
            <person name="Sekiguchi K."/>
            <person name="Semple C.A."/>
            <person name="Seno S."/>
            <person name="Sessa L."/>
            <person name="Sheng Y."/>
            <person name="Shibata Y."/>
            <person name="Shimada H."/>
            <person name="Shimada K."/>
            <person name="Silva D."/>
            <person name="Sinclair B."/>
            <person name="Sperling S."/>
            <person name="Stupka E."/>
            <person name="Sugiura K."/>
            <person name="Sultana R."/>
            <person name="Takenaka Y."/>
            <person name="Taki K."/>
            <person name="Tammoja K."/>
            <person name="Tan S.L."/>
            <person name="Tang S."/>
            <person name="Taylor M.S."/>
            <person name="Tegner J."/>
            <person name="Teichmann S.A."/>
            <person name="Ueda H.R."/>
            <person name="van Nimwegen E."/>
            <person name="Verardo R."/>
            <person name="Wei C.L."/>
            <person name="Yagi K."/>
            <person name="Yamanishi H."/>
            <person name="Zabarovsky E."/>
            <person name="Zhu S."/>
            <person name="Zimmer A."/>
            <person name="Hide W."/>
            <person name="Bult C."/>
            <person name="Grimmond S.M."/>
            <person name="Teasdale R.D."/>
            <person name="Liu E.T."/>
            <person name="Brusic V."/>
            <person name="Quackenbush J."/>
            <person name="Wahlestedt C."/>
            <person name="Mattick J.S."/>
            <person name="Hume D.A."/>
            <person name="Kai C."/>
            <person name="Sasaki D."/>
            <person name="Tomaru Y."/>
            <person name="Fukuda S."/>
            <person name="Kanamori-Katayama M."/>
            <person name="Suzuki M."/>
            <person name="Aoki J."/>
            <person name="Arakawa T."/>
            <person name="Iida J."/>
            <person name="Imamura K."/>
            <person name="Itoh M."/>
            <person name="Kato T."/>
            <person name="Kawaji H."/>
            <person name="Kawagashira N."/>
            <person name="Kawashima T."/>
            <person name="Kojima M."/>
            <person name="Kondo S."/>
            <person name="Konno H."/>
            <person name="Nakano K."/>
            <person name="Ninomiya N."/>
            <person name="Nishio T."/>
            <person name="Okada M."/>
            <person name="Plessy C."/>
            <person name="Shibata K."/>
            <person name="Shiraki T."/>
            <person name="Suzuki S."/>
            <person name="Tagami M."/>
            <person name="Waki K."/>
            <person name="Watahiki A."/>
            <person name="Okamura-Oho Y."/>
            <person name="Suzuki H."/>
            <person name="Kawai J."/>
            <person name="Hayashizaki Y."/>
        </authorList>
    </citation>
    <scope>NUCLEOTIDE SEQUENCE [LARGE SCALE MRNA] OF 85-200</scope>
    <source>
        <strain>C57BL/6J</strain>
        <tissue>Testis</tissue>
    </source>
</reference>
<reference key="4">
    <citation type="journal article" date="2008" name="J. Cell Biol.">
        <title>E2-25K/Hip-2 regulates caspase-12 in ER stress-mediated Abeta neurotoxicity.</title>
        <authorList>
            <person name="Song S."/>
            <person name="Lee H."/>
            <person name="Kam T.I."/>
            <person name="Tai M.L."/>
            <person name="Lee J.Y."/>
            <person name="Noh J.Y."/>
            <person name="Shim S.M."/>
            <person name="Seo S.J."/>
            <person name="Kong Y.Y."/>
            <person name="Nakagawa T."/>
            <person name="Chung C.W."/>
            <person name="Choi D.Y."/>
            <person name="Oubrahim H."/>
            <person name="Jung Y.K."/>
        </authorList>
    </citation>
    <scope>FUNCTION IN UBIQUITINATION OF CASP12</scope>
    <scope>DISRUPTION PHENOTYPE</scope>
</reference>
<reference key="5">
    <citation type="journal article" date="2010" name="Cell">
        <title>A tissue-specific atlas of mouse protein phosphorylation and expression.</title>
        <authorList>
            <person name="Huttlin E.L."/>
            <person name="Jedrychowski M.P."/>
            <person name="Elias J.E."/>
            <person name="Goswami T."/>
            <person name="Rad R."/>
            <person name="Beausoleil S.A."/>
            <person name="Villen J."/>
            <person name="Haas W."/>
            <person name="Sowa M.E."/>
            <person name="Gygi S.P."/>
        </authorList>
    </citation>
    <scope>IDENTIFICATION BY MASS SPECTROMETRY [LARGE SCALE ANALYSIS]</scope>
    <source>
        <tissue>Brain</tissue>
        <tissue>Brown adipose tissue</tissue>
        <tissue>Heart</tissue>
        <tissue>Kidney</tissue>
        <tissue>Liver</tissue>
        <tissue>Lung</tissue>
        <tissue>Pancreas</tissue>
        <tissue>Spleen</tissue>
        <tissue>Testis</tissue>
    </source>
</reference>
<feature type="initiator methionine" description="Removed" evidence="2">
    <location>
        <position position="1"/>
    </location>
</feature>
<feature type="chain" id="PRO_0000082444" description="Ubiquitin-conjugating enzyme E2 K">
    <location>
        <begin position="2"/>
        <end position="200"/>
    </location>
</feature>
<feature type="domain" description="UBC core" evidence="4">
    <location>
        <begin position="4"/>
        <end position="154"/>
    </location>
</feature>
<feature type="domain" description="UBA" evidence="3">
    <location>
        <begin position="160"/>
        <end position="200"/>
    </location>
</feature>
<feature type="active site" description="Glycyl thioester intermediate" evidence="4 5">
    <location>
        <position position="92"/>
    </location>
</feature>
<feature type="modified residue" description="N-acetylalanine" evidence="2">
    <location>
        <position position="2"/>
    </location>
</feature>
<feature type="modified residue" description="N6-acetyllysine; alternate" evidence="2">
    <location>
        <position position="14"/>
    </location>
</feature>
<feature type="modified residue" description="Phosphoserine" evidence="2">
    <location>
        <position position="159"/>
    </location>
</feature>
<feature type="cross-link" description="Glycyl lysine isopeptide (Lys-Gly) (interchain with G-Cter in SUMO); alternate" evidence="1">
    <location>
        <position position="14"/>
    </location>
</feature>
<feature type="cross-link" description="Glycyl lysine isopeptide (Lys-Gly) (interchain with G-Cter in SUMO1); alternate" evidence="2">
    <location>
        <position position="14"/>
    </location>
</feature>
<feature type="sequence conflict" description="In Ref. 1; BAA24927." evidence="8" ref="1">
    <original>T</original>
    <variation>P</variation>
    <location>
        <position position="163"/>
    </location>
</feature>